<feature type="chain" id="PRO_0000196075" description="Segmentation polarity homeobox protein engrailed">
    <location>
        <begin position="1"/>
        <end position="594"/>
    </location>
</feature>
<feature type="DNA-binding region" description="Homeobox" evidence="2">
    <location>
        <begin position="496"/>
        <end position="555"/>
    </location>
</feature>
<feature type="region of interest" description="Disordered" evidence="3">
    <location>
        <begin position="1"/>
        <end position="64"/>
    </location>
</feature>
<feature type="region of interest" description="Disordered" evidence="3">
    <location>
        <begin position="76"/>
        <end position="127"/>
    </location>
</feature>
<feature type="region of interest" description="Disordered" evidence="3">
    <location>
        <begin position="141"/>
        <end position="164"/>
    </location>
</feature>
<feature type="region of interest" description="Disordered" evidence="3">
    <location>
        <begin position="198"/>
        <end position="217"/>
    </location>
</feature>
<feature type="region of interest" description="Disordered" evidence="3">
    <location>
        <begin position="231"/>
        <end position="299"/>
    </location>
</feature>
<feature type="region of interest" description="Disordered" evidence="3">
    <location>
        <begin position="387"/>
        <end position="458"/>
    </location>
</feature>
<feature type="region of interest" description="Disordered" evidence="3">
    <location>
        <begin position="474"/>
        <end position="501"/>
    </location>
</feature>
<feature type="compositionally biased region" description="Low complexity" evidence="3">
    <location>
        <begin position="22"/>
        <end position="60"/>
    </location>
</feature>
<feature type="compositionally biased region" description="Basic residues" evidence="3">
    <location>
        <begin position="92"/>
        <end position="112"/>
    </location>
</feature>
<feature type="compositionally biased region" description="Pro residues" evidence="3">
    <location>
        <begin position="151"/>
        <end position="164"/>
    </location>
</feature>
<feature type="compositionally biased region" description="Polar residues" evidence="3">
    <location>
        <begin position="237"/>
        <end position="247"/>
    </location>
</feature>
<feature type="compositionally biased region" description="Low complexity" evidence="3">
    <location>
        <begin position="278"/>
        <end position="299"/>
    </location>
</feature>
<feature type="compositionally biased region" description="Low complexity" evidence="3">
    <location>
        <begin position="387"/>
        <end position="402"/>
    </location>
</feature>
<feature type="compositionally biased region" description="Polar residues" evidence="3">
    <location>
        <begin position="426"/>
        <end position="436"/>
    </location>
</feature>
<feature type="compositionally biased region" description="Polar residues" evidence="3">
    <location>
        <begin position="448"/>
        <end position="458"/>
    </location>
</feature>
<feature type="compositionally biased region" description="Basic and acidic residues" evidence="3">
    <location>
        <begin position="487"/>
        <end position="499"/>
    </location>
</feature>
<feature type="sequence conflict" description="In Ref. 1; AAB54088/AAB58461." evidence="4" ref="1">
    <original>T</original>
    <variation>S</variation>
    <location>
        <position position="47"/>
    </location>
</feature>
<feature type="sequence conflict" description="In Ref. 1; AAB54088/AAB58461." evidence="4" ref="1">
    <original>L</original>
    <variation>V</variation>
    <location>
        <position position="67"/>
    </location>
</feature>
<feature type="sequence conflict" description="In Ref. 1; AAB54088/AAB58461." evidence="4" ref="1">
    <original>P</original>
    <variation>S</variation>
    <location>
        <position position="154"/>
    </location>
</feature>
<feature type="sequence conflict" description="In Ref. 1; AAB54088/AAB58461." evidence="4" ref="1">
    <original>V</original>
    <variation>A</variation>
    <location>
        <position position="291"/>
    </location>
</feature>
<feature type="sequence conflict" description="In Ref. 1; AAB54088/AAB58461." evidence="4" ref="1">
    <original>N</original>
    <variation>NR</variation>
    <location>
        <position position="335"/>
    </location>
</feature>
<feature type="sequence conflict" description="In Ref. 1; AAB54088/AAB58461." evidence="4" ref="1">
    <original>A</original>
    <variation>R</variation>
    <location>
        <position position="343"/>
    </location>
</feature>
<feature type="sequence conflict" description="In Ref. 1; AAB54088/AAB58461." evidence="4" ref="1">
    <original>G</original>
    <variation>S</variation>
    <location>
        <position position="356"/>
    </location>
</feature>
<feature type="sequence conflict" description="In Ref. 1; AAB54088/AAB58461." evidence="4" ref="1">
    <original>G</original>
    <variation>GA</variation>
    <location>
        <position position="362"/>
    </location>
</feature>
<feature type="sequence conflict" description="In Ref. 1; AAB54088/AAB58461." evidence="4" ref="1">
    <original>A</original>
    <variation>T</variation>
    <location>
        <position position="399"/>
    </location>
</feature>
<feature type="sequence conflict" description="In Ref. 1; AAB54088/AAB58461." evidence="4" ref="1">
    <original>DA</original>
    <variation>ER</variation>
    <location>
        <begin position="436"/>
        <end position="437"/>
    </location>
</feature>
<feature type="sequence conflict" description="In Ref. 1; AAB54088/AAB58461." evidence="4" ref="1">
    <original>EKG</original>
    <variation>KRA</variation>
    <location>
        <begin position="490"/>
        <end position="492"/>
    </location>
</feature>
<proteinExistence type="evidence at transcript level"/>
<accession>O02491</accession>
<accession>Q7PJ43</accession>
<sequence>MALEDRCSPQSAPSPPHHHHSSQSPTSTTTVTMATASPVPACTTTTTTTSTSGASAASSPTRDEMSLVVPISPLHIKQEPLGSDGPMPAQPPHHHQHPHHHQLPHHPHHQHHPQQQPSPQTSPPASISFSITNILSDRFGKATAEQQQQPHPQPPAIREPISPGPIHPAVLLPYPQHVLHPAHHPALLHPAYHTGLHHYYQPSPSHPQPIVPQPQRASLERRDSLFRPYDISKSPRLCSSNGSSSATPLPLHPYHTDSDCSTQDSTSAPSPATYGDIASPSSASSAMTTPVTTSSPTGSVYDYSRKASALDHRAALLNGFSAAASYPKLHEEIINPPQVPGEADRIANEGGTGCGGHGCCGGSATPHNMPPLGSLCKTVSQIGQHVAGTGSLNGSGSAANGASNGGSGAPATAKPTPKPIPKPAPSSETNGSSSQDAGMESSDDAKSETSSTKDGSENGSNLWPAWVYCTRYSDRPSSGPRYRRTKQPKEKGDSEEKRPRTAFSNAQLQRLKNEFNENRYLTEKRRQTLSAELGLNEAQIKIWFQNKRAKIKKSSSEKNPLALQLMAQGLYNHSTVPLTKEEEELEMRMNGQIP</sequence>
<reference key="1">
    <citation type="journal article" date="1997" name="Development">
        <title>Rescue of Drosophila engrailed mutants with a highly divergent mosquito engrailed cDNA using a homing, enhancer-trapping transposon.</title>
        <authorList>
            <person name="Whiteley M."/>
            <person name="Kassis J.A."/>
        </authorList>
    </citation>
    <scope>NUCLEOTIDE SEQUENCE [GENOMIC DNA / MRNA]</scope>
</reference>
<reference key="2">
    <citation type="journal article" date="2002" name="Science">
        <title>The genome sequence of the malaria mosquito Anopheles gambiae.</title>
        <authorList>
            <person name="Holt R.A."/>
            <person name="Subramanian G.M."/>
            <person name="Halpern A."/>
            <person name="Sutton G.G."/>
            <person name="Charlab R."/>
            <person name="Nusskern D.R."/>
            <person name="Wincker P."/>
            <person name="Clark A.G."/>
            <person name="Ribeiro J.M.C."/>
            <person name="Wides R."/>
            <person name="Salzberg S.L."/>
            <person name="Loftus B.J."/>
            <person name="Yandell M.D."/>
            <person name="Majoros W.H."/>
            <person name="Rusch D.B."/>
            <person name="Lai Z."/>
            <person name="Kraft C.L."/>
            <person name="Abril J.F."/>
            <person name="Anthouard V."/>
            <person name="Arensburger P."/>
            <person name="Atkinson P.W."/>
            <person name="Baden H."/>
            <person name="de Berardinis V."/>
            <person name="Baldwin D."/>
            <person name="Benes V."/>
            <person name="Biedler J."/>
            <person name="Blass C."/>
            <person name="Bolanos R."/>
            <person name="Boscus D."/>
            <person name="Barnstead M."/>
            <person name="Cai S."/>
            <person name="Center A."/>
            <person name="Chaturverdi K."/>
            <person name="Christophides G.K."/>
            <person name="Chrystal M.A.M."/>
            <person name="Clamp M."/>
            <person name="Cravchik A."/>
            <person name="Curwen V."/>
            <person name="Dana A."/>
            <person name="Delcher A."/>
            <person name="Dew I."/>
            <person name="Evans C.A."/>
            <person name="Flanigan M."/>
            <person name="Grundschober-Freimoser A."/>
            <person name="Friedli L."/>
            <person name="Gu Z."/>
            <person name="Guan P."/>
            <person name="Guigo R."/>
            <person name="Hillenmeyer M.E."/>
            <person name="Hladun S.L."/>
            <person name="Hogan J.R."/>
            <person name="Hong Y.S."/>
            <person name="Hoover J."/>
            <person name="Jaillon O."/>
            <person name="Ke Z."/>
            <person name="Kodira C.D."/>
            <person name="Kokoza E."/>
            <person name="Koutsos A."/>
            <person name="Letunic I."/>
            <person name="Levitsky A.A."/>
            <person name="Liang Y."/>
            <person name="Lin J.-J."/>
            <person name="Lobo N.F."/>
            <person name="Lopez J.R."/>
            <person name="Malek J.A."/>
            <person name="McIntosh T.C."/>
            <person name="Meister S."/>
            <person name="Miller J.R."/>
            <person name="Mobarry C."/>
            <person name="Mongin E."/>
            <person name="Murphy S.D."/>
            <person name="O'Brochta D.A."/>
            <person name="Pfannkoch C."/>
            <person name="Qi R."/>
            <person name="Regier M.A."/>
            <person name="Remington K."/>
            <person name="Shao H."/>
            <person name="Sharakhova M.V."/>
            <person name="Sitter C.D."/>
            <person name="Shetty J."/>
            <person name="Smith T.J."/>
            <person name="Strong R."/>
            <person name="Sun J."/>
            <person name="Thomasova D."/>
            <person name="Ton L.Q."/>
            <person name="Topalis P."/>
            <person name="Tu Z.J."/>
            <person name="Unger M.F."/>
            <person name="Walenz B."/>
            <person name="Wang A.H."/>
            <person name="Wang J."/>
            <person name="Wang M."/>
            <person name="Wang X."/>
            <person name="Woodford K.J."/>
            <person name="Wortman J.R."/>
            <person name="Wu M."/>
            <person name="Yao A."/>
            <person name="Zdobnov E.M."/>
            <person name="Zhang H."/>
            <person name="Zhao Q."/>
            <person name="Zhao S."/>
            <person name="Zhu S.C."/>
            <person name="Zhimulev I."/>
            <person name="Coluzzi M."/>
            <person name="della Torre A."/>
            <person name="Roth C.W."/>
            <person name="Louis C."/>
            <person name="Kalush F."/>
            <person name="Mural R.J."/>
            <person name="Myers E.W."/>
            <person name="Adams M.D."/>
            <person name="Smith H.O."/>
            <person name="Broder S."/>
            <person name="Gardner M.J."/>
            <person name="Fraser C.M."/>
            <person name="Birney E."/>
            <person name="Bork P."/>
            <person name="Brey P.T."/>
            <person name="Venter J.C."/>
            <person name="Weissenbach J."/>
            <person name="Kafatos F.C."/>
            <person name="Collins F.H."/>
            <person name="Hoffman S.L."/>
        </authorList>
    </citation>
    <scope>NUCLEOTIDE SEQUENCE [LARGE SCALE GENOMIC DNA]</scope>
    <source>
        <strain>PEST</strain>
    </source>
</reference>
<evidence type="ECO:0000250" key="1"/>
<evidence type="ECO:0000255" key="2">
    <source>
        <dbReference type="PROSITE-ProRule" id="PRU00108"/>
    </source>
</evidence>
<evidence type="ECO:0000256" key="3">
    <source>
        <dbReference type="SAM" id="MobiDB-lite"/>
    </source>
</evidence>
<evidence type="ECO:0000305" key="4"/>
<protein>
    <recommendedName>
        <fullName>Segmentation polarity homeobox protein engrailed</fullName>
    </recommendedName>
</protein>
<organism>
    <name type="scientific">Anopheles gambiae</name>
    <name type="common">African malaria mosquito</name>
    <dbReference type="NCBI Taxonomy" id="7165"/>
    <lineage>
        <taxon>Eukaryota</taxon>
        <taxon>Metazoa</taxon>
        <taxon>Ecdysozoa</taxon>
        <taxon>Arthropoda</taxon>
        <taxon>Hexapoda</taxon>
        <taxon>Insecta</taxon>
        <taxon>Pterygota</taxon>
        <taxon>Neoptera</taxon>
        <taxon>Endopterygota</taxon>
        <taxon>Diptera</taxon>
        <taxon>Nematocera</taxon>
        <taxon>Culicoidea</taxon>
        <taxon>Culicidae</taxon>
        <taxon>Anophelinae</taxon>
        <taxon>Anopheles</taxon>
    </lineage>
</organism>
<keyword id="KW-0217">Developmental protein</keyword>
<keyword id="KW-0238">DNA-binding</keyword>
<keyword id="KW-0371">Homeobox</keyword>
<keyword id="KW-0539">Nucleus</keyword>
<keyword id="KW-1185">Reference proteome</keyword>
<keyword id="KW-0709">Segmentation polarity protein</keyword>
<gene>
    <name type="primary">en</name>
    <name type="ORF">AGAP008023</name>
</gene>
<comment type="function">
    <text evidence="1">This protein specifies the body segmentation pattern. It is required for the development of the central nervous system. Transcriptional regulator that repress activated promoters (By similarity).</text>
</comment>
<comment type="subcellular location">
    <subcellularLocation>
        <location evidence="2">Nucleus</location>
    </subcellularLocation>
</comment>
<comment type="similarity">
    <text evidence="4">Belongs to the engrailed homeobox family.</text>
</comment>
<name>HMEN_ANOGA</name>
<dbReference type="EMBL" id="U42214">
    <property type="protein sequence ID" value="AAB58461.1"/>
    <property type="molecule type" value="Genomic_DNA"/>
</dbReference>
<dbReference type="EMBL" id="U42429">
    <property type="protein sequence ID" value="AAB54088.1"/>
    <property type="molecule type" value="mRNA"/>
</dbReference>
<dbReference type="EMBL" id="AAAB01008964">
    <property type="protein sequence ID" value="EAA43906.3"/>
    <property type="molecule type" value="Genomic_DNA"/>
</dbReference>
<dbReference type="RefSeq" id="XP_317438.3">
    <property type="nucleotide sequence ID" value="XM_317438.4"/>
</dbReference>
<dbReference type="SMR" id="O02491"/>
<dbReference type="STRING" id="7165.O02491"/>
<dbReference type="PaxDb" id="7165-AGAP008023-PA"/>
<dbReference type="GeneID" id="1277926"/>
<dbReference type="KEGG" id="aga:1277926"/>
<dbReference type="VEuPathDB" id="VectorBase:AGAMI1_003079"/>
<dbReference type="VEuPathDB" id="VectorBase:AGAP008023"/>
<dbReference type="eggNOG" id="KOG0493">
    <property type="taxonomic scope" value="Eukaryota"/>
</dbReference>
<dbReference type="HOGENOM" id="CLU_021330_0_0_1"/>
<dbReference type="InParanoid" id="O02491"/>
<dbReference type="PhylomeDB" id="O02491"/>
<dbReference type="Proteomes" id="UP000007062">
    <property type="component" value="Chromosome 3R"/>
</dbReference>
<dbReference type="GO" id="GO:0005634">
    <property type="term" value="C:nucleus"/>
    <property type="evidence" value="ECO:0000318"/>
    <property type="project" value="GO_Central"/>
</dbReference>
<dbReference type="GO" id="GO:0000981">
    <property type="term" value="F:DNA-binding transcription factor activity, RNA polymerase II-specific"/>
    <property type="evidence" value="ECO:0000318"/>
    <property type="project" value="GO_Central"/>
</dbReference>
<dbReference type="GO" id="GO:0000978">
    <property type="term" value="F:RNA polymerase II cis-regulatory region sequence-specific DNA binding"/>
    <property type="evidence" value="ECO:0000318"/>
    <property type="project" value="GO_Central"/>
</dbReference>
<dbReference type="GO" id="GO:0030154">
    <property type="term" value="P:cell differentiation"/>
    <property type="evidence" value="ECO:0007669"/>
    <property type="project" value="UniProtKB-ARBA"/>
</dbReference>
<dbReference type="GO" id="GO:0007399">
    <property type="term" value="P:nervous system development"/>
    <property type="evidence" value="ECO:0007669"/>
    <property type="project" value="UniProtKB-ARBA"/>
</dbReference>
<dbReference type="GO" id="GO:0006357">
    <property type="term" value="P:regulation of transcription by RNA polymerase II"/>
    <property type="evidence" value="ECO:0000318"/>
    <property type="project" value="GO_Central"/>
</dbReference>
<dbReference type="GO" id="GO:0007367">
    <property type="term" value="P:segment polarity determination"/>
    <property type="evidence" value="ECO:0007669"/>
    <property type="project" value="UniProtKB-KW"/>
</dbReference>
<dbReference type="CDD" id="cd00086">
    <property type="entry name" value="homeodomain"/>
    <property type="match status" value="1"/>
</dbReference>
<dbReference type="FunFam" id="1.10.10.60:FF:000189">
    <property type="entry name" value="Homeobox protein engrailed-like"/>
    <property type="match status" value="1"/>
</dbReference>
<dbReference type="Gene3D" id="1.10.10.60">
    <property type="entry name" value="Homeodomain-like"/>
    <property type="match status" value="1"/>
</dbReference>
<dbReference type="InterPro" id="IPR050720">
    <property type="entry name" value="Engrailed_Homeobox_TFs"/>
</dbReference>
<dbReference type="InterPro" id="IPR001356">
    <property type="entry name" value="HD"/>
</dbReference>
<dbReference type="InterPro" id="IPR000747">
    <property type="entry name" value="HD_engrailed"/>
</dbReference>
<dbReference type="InterPro" id="IPR020479">
    <property type="entry name" value="HD_metazoa"/>
</dbReference>
<dbReference type="InterPro" id="IPR019549">
    <property type="entry name" value="Homeobox-engrailed_C-terminal"/>
</dbReference>
<dbReference type="InterPro" id="IPR019737">
    <property type="entry name" value="Homeobox-engrailed_CS"/>
</dbReference>
<dbReference type="InterPro" id="IPR017970">
    <property type="entry name" value="Homeobox_CS"/>
</dbReference>
<dbReference type="InterPro" id="IPR009057">
    <property type="entry name" value="Homeodomain-like_sf"/>
</dbReference>
<dbReference type="InterPro" id="IPR000047">
    <property type="entry name" value="HTH_motif"/>
</dbReference>
<dbReference type="PANTHER" id="PTHR24341">
    <property type="entry name" value="HOMEOBOX PROTEIN ENGRAILED"/>
    <property type="match status" value="1"/>
</dbReference>
<dbReference type="PANTHER" id="PTHR24341:SF9">
    <property type="entry name" value="SEGMENTATION POLARITY HOMEOBOX PROTEIN ENGRAILED"/>
    <property type="match status" value="1"/>
</dbReference>
<dbReference type="Pfam" id="PF10525">
    <property type="entry name" value="Engrail_1_C_sig"/>
    <property type="match status" value="1"/>
</dbReference>
<dbReference type="Pfam" id="PF00046">
    <property type="entry name" value="Homeodomain"/>
    <property type="match status" value="1"/>
</dbReference>
<dbReference type="PRINTS" id="PR00026">
    <property type="entry name" value="ENGRAILED"/>
</dbReference>
<dbReference type="PRINTS" id="PR00024">
    <property type="entry name" value="HOMEOBOX"/>
</dbReference>
<dbReference type="PRINTS" id="PR00031">
    <property type="entry name" value="HTHREPRESSR"/>
</dbReference>
<dbReference type="SMART" id="SM00389">
    <property type="entry name" value="HOX"/>
    <property type="match status" value="1"/>
</dbReference>
<dbReference type="SUPFAM" id="SSF46689">
    <property type="entry name" value="Homeodomain-like"/>
    <property type="match status" value="1"/>
</dbReference>
<dbReference type="PROSITE" id="PS00033">
    <property type="entry name" value="ENGRAILED"/>
    <property type="match status" value="1"/>
</dbReference>
<dbReference type="PROSITE" id="PS00027">
    <property type="entry name" value="HOMEOBOX_1"/>
    <property type="match status" value="1"/>
</dbReference>
<dbReference type="PROSITE" id="PS50071">
    <property type="entry name" value="HOMEOBOX_2"/>
    <property type="match status" value="1"/>
</dbReference>